<evidence type="ECO:0000250" key="1">
    <source>
        <dbReference type="UniProtKB" id="Q9P209"/>
    </source>
</evidence>
<evidence type="ECO:0000255" key="2"/>
<evidence type="ECO:0000256" key="3">
    <source>
        <dbReference type="SAM" id="MobiDB-lite"/>
    </source>
</evidence>
<evidence type="ECO:0000303" key="4">
    <source>
    </source>
</evidence>
<evidence type="ECO:0000305" key="5"/>
<evidence type="ECO:0007744" key="6">
    <source>
    </source>
</evidence>
<reference key="1">
    <citation type="journal article" date="2005" name="Science">
        <title>The transcriptional landscape of the mammalian genome.</title>
        <authorList>
            <person name="Carninci P."/>
            <person name="Kasukawa T."/>
            <person name="Katayama S."/>
            <person name="Gough J."/>
            <person name="Frith M.C."/>
            <person name="Maeda N."/>
            <person name="Oyama R."/>
            <person name="Ravasi T."/>
            <person name="Lenhard B."/>
            <person name="Wells C."/>
            <person name="Kodzius R."/>
            <person name="Shimokawa K."/>
            <person name="Bajic V.B."/>
            <person name="Brenner S.E."/>
            <person name="Batalov S."/>
            <person name="Forrest A.R."/>
            <person name="Zavolan M."/>
            <person name="Davis M.J."/>
            <person name="Wilming L.G."/>
            <person name="Aidinis V."/>
            <person name="Allen J.E."/>
            <person name="Ambesi-Impiombato A."/>
            <person name="Apweiler R."/>
            <person name="Aturaliya R.N."/>
            <person name="Bailey T.L."/>
            <person name="Bansal M."/>
            <person name="Baxter L."/>
            <person name="Beisel K.W."/>
            <person name="Bersano T."/>
            <person name="Bono H."/>
            <person name="Chalk A.M."/>
            <person name="Chiu K.P."/>
            <person name="Choudhary V."/>
            <person name="Christoffels A."/>
            <person name="Clutterbuck D.R."/>
            <person name="Crowe M.L."/>
            <person name="Dalla E."/>
            <person name="Dalrymple B.P."/>
            <person name="de Bono B."/>
            <person name="Della Gatta G."/>
            <person name="di Bernardo D."/>
            <person name="Down T."/>
            <person name="Engstrom P."/>
            <person name="Fagiolini M."/>
            <person name="Faulkner G."/>
            <person name="Fletcher C.F."/>
            <person name="Fukushima T."/>
            <person name="Furuno M."/>
            <person name="Futaki S."/>
            <person name="Gariboldi M."/>
            <person name="Georgii-Hemming P."/>
            <person name="Gingeras T.R."/>
            <person name="Gojobori T."/>
            <person name="Green R.E."/>
            <person name="Gustincich S."/>
            <person name="Harbers M."/>
            <person name="Hayashi Y."/>
            <person name="Hensch T.K."/>
            <person name="Hirokawa N."/>
            <person name="Hill D."/>
            <person name="Huminiecki L."/>
            <person name="Iacono M."/>
            <person name="Ikeo K."/>
            <person name="Iwama A."/>
            <person name="Ishikawa T."/>
            <person name="Jakt M."/>
            <person name="Kanapin A."/>
            <person name="Katoh M."/>
            <person name="Kawasawa Y."/>
            <person name="Kelso J."/>
            <person name="Kitamura H."/>
            <person name="Kitano H."/>
            <person name="Kollias G."/>
            <person name="Krishnan S.P."/>
            <person name="Kruger A."/>
            <person name="Kummerfeld S.K."/>
            <person name="Kurochkin I.V."/>
            <person name="Lareau L.F."/>
            <person name="Lazarevic D."/>
            <person name="Lipovich L."/>
            <person name="Liu J."/>
            <person name="Liuni S."/>
            <person name="McWilliam S."/>
            <person name="Madan Babu M."/>
            <person name="Madera M."/>
            <person name="Marchionni L."/>
            <person name="Matsuda H."/>
            <person name="Matsuzawa S."/>
            <person name="Miki H."/>
            <person name="Mignone F."/>
            <person name="Miyake S."/>
            <person name="Morris K."/>
            <person name="Mottagui-Tabar S."/>
            <person name="Mulder N."/>
            <person name="Nakano N."/>
            <person name="Nakauchi H."/>
            <person name="Ng P."/>
            <person name="Nilsson R."/>
            <person name="Nishiguchi S."/>
            <person name="Nishikawa S."/>
            <person name="Nori F."/>
            <person name="Ohara O."/>
            <person name="Okazaki Y."/>
            <person name="Orlando V."/>
            <person name="Pang K.C."/>
            <person name="Pavan W.J."/>
            <person name="Pavesi G."/>
            <person name="Pesole G."/>
            <person name="Petrovsky N."/>
            <person name="Piazza S."/>
            <person name="Reed J."/>
            <person name="Reid J.F."/>
            <person name="Ring B.Z."/>
            <person name="Ringwald M."/>
            <person name="Rost B."/>
            <person name="Ruan Y."/>
            <person name="Salzberg S.L."/>
            <person name="Sandelin A."/>
            <person name="Schneider C."/>
            <person name="Schoenbach C."/>
            <person name="Sekiguchi K."/>
            <person name="Semple C.A."/>
            <person name="Seno S."/>
            <person name="Sessa L."/>
            <person name="Sheng Y."/>
            <person name="Shibata Y."/>
            <person name="Shimada H."/>
            <person name="Shimada K."/>
            <person name="Silva D."/>
            <person name="Sinclair B."/>
            <person name="Sperling S."/>
            <person name="Stupka E."/>
            <person name="Sugiura K."/>
            <person name="Sultana R."/>
            <person name="Takenaka Y."/>
            <person name="Taki K."/>
            <person name="Tammoja K."/>
            <person name="Tan S.L."/>
            <person name="Tang S."/>
            <person name="Taylor M.S."/>
            <person name="Tegner J."/>
            <person name="Teichmann S.A."/>
            <person name="Ueda H.R."/>
            <person name="van Nimwegen E."/>
            <person name="Verardo R."/>
            <person name="Wei C.L."/>
            <person name="Yagi K."/>
            <person name="Yamanishi H."/>
            <person name="Zabarovsky E."/>
            <person name="Zhu S."/>
            <person name="Zimmer A."/>
            <person name="Hide W."/>
            <person name="Bult C."/>
            <person name="Grimmond S.M."/>
            <person name="Teasdale R.D."/>
            <person name="Liu E.T."/>
            <person name="Brusic V."/>
            <person name="Quackenbush J."/>
            <person name="Wahlestedt C."/>
            <person name="Mattick J.S."/>
            <person name="Hume D.A."/>
            <person name="Kai C."/>
            <person name="Sasaki D."/>
            <person name="Tomaru Y."/>
            <person name="Fukuda S."/>
            <person name="Kanamori-Katayama M."/>
            <person name="Suzuki M."/>
            <person name="Aoki J."/>
            <person name="Arakawa T."/>
            <person name="Iida J."/>
            <person name="Imamura K."/>
            <person name="Itoh M."/>
            <person name="Kato T."/>
            <person name="Kawaji H."/>
            <person name="Kawagashira N."/>
            <person name="Kawashima T."/>
            <person name="Kojima M."/>
            <person name="Kondo S."/>
            <person name="Konno H."/>
            <person name="Nakano K."/>
            <person name="Ninomiya N."/>
            <person name="Nishio T."/>
            <person name="Okada M."/>
            <person name="Plessy C."/>
            <person name="Shibata K."/>
            <person name="Shiraki T."/>
            <person name="Suzuki S."/>
            <person name="Tagami M."/>
            <person name="Waki K."/>
            <person name="Watahiki A."/>
            <person name="Okamura-Oho Y."/>
            <person name="Suzuki H."/>
            <person name="Kawai J."/>
            <person name="Hayashizaki Y."/>
        </authorList>
    </citation>
    <scope>NUCLEOTIDE SEQUENCE [LARGE SCALE MRNA] (ISOFORMS 1 AND 2)</scope>
    <source>
        <strain>C57BL/6J</strain>
        <tissue>Embryo</tissue>
        <tissue>Liver</tissue>
        <tissue>Testis</tissue>
    </source>
</reference>
<reference key="2">
    <citation type="journal article" date="2009" name="PLoS Biol.">
        <title>Lineage-specific biology revealed by a finished genome assembly of the mouse.</title>
        <authorList>
            <person name="Church D.M."/>
            <person name="Goodstadt L."/>
            <person name="Hillier L.W."/>
            <person name="Zody M.C."/>
            <person name="Goldstein S."/>
            <person name="She X."/>
            <person name="Bult C.J."/>
            <person name="Agarwala R."/>
            <person name="Cherry J.L."/>
            <person name="DiCuccio M."/>
            <person name="Hlavina W."/>
            <person name="Kapustin Y."/>
            <person name="Meric P."/>
            <person name="Maglott D."/>
            <person name="Birtle Z."/>
            <person name="Marques A.C."/>
            <person name="Graves T."/>
            <person name="Zhou S."/>
            <person name="Teague B."/>
            <person name="Potamousis K."/>
            <person name="Churas C."/>
            <person name="Place M."/>
            <person name="Herschleb J."/>
            <person name="Runnheim R."/>
            <person name="Forrest D."/>
            <person name="Amos-Landgraf J."/>
            <person name="Schwartz D.C."/>
            <person name="Cheng Z."/>
            <person name="Lindblad-Toh K."/>
            <person name="Eichler E.E."/>
            <person name="Ponting C.P."/>
        </authorList>
    </citation>
    <scope>NUCLEOTIDE SEQUENCE [LARGE SCALE GENOMIC DNA]</scope>
    <source>
        <strain>C57BL/6J</strain>
    </source>
</reference>
<reference key="3">
    <citation type="journal article" date="2004" name="Genome Res.">
        <title>The status, quality, and expansion of the NIH full-length cDNA project: the Mammalian Gene Collection (MGC).</title>
        <authorList>
            <consortium name="The MGC Project Team"/>
        </authorList>
    </citation>
    <scope>NUCLEOTIDE SEQUENCE [LARGE SCALE MRNA] OF 44-646 (ISOFORM 1)</scope>
    <source>
        <strain>C57BL/6J</strain>
        <tissue>Brain</tissue>
    </source>
</reference>
<reference key="4">
    <citation type="journal article" date="2004" name="DNA Res.">
        <title>Prediction of the coding sequences of mouse homologues of KIAA gene: IV. The complete nucleotide sequences of 500 mouse KIAA-homologous cDNAs identified by screening of terminal sequences of cDNA clones randomly sampled from size-fractionated libraries.</title>
        <authorList>
            <person name="Okazaki N."/>
            <person name="Kikuno R."/>
            <person name="Ohara R."/>
            <person name="Inamoto S."/>
            <person name="Koseki H."/>
            <person name="Hiraoka S."/>
            <person name="Saga Y."/>
            <person name="Seino S."/>
            <person name="Nishimura M."/>
            <person name="Kaisho T."/>
            <person name="Hoshino K."/>
            <person name="Kitamura H."/>
            <person name="Nagase T."/>
            <person name="Ohara O."/>
            <person name="Koga H."/>
        </authorList>
    </citation>
    <scope>NUCLEOTIDE SEQUENCE [LARGE SCALE MRNA] OF 231-646 (ISOFORM 1)</scope>
    <source>
        <tissue>Embryonic tail</tissue>
    </source>
</reference>
<reference key="5">
    <citation type="journal article" date="2010" name="Cell">
        <title>A tissue-specific atlas of mouse protein phosphorylation and expression.</title>
        <authorList>
            <person name="Huttlin E.L."/>
            <person name="Jedrychowski M.P."/>
            <person name="Elias J.E."/>
            <person name="Goswami T."/>
            <person name="Rad R."/>
            <person name="Beausoleil S.A."/>
            <person name="Villen J."/>
            <person name="Haas W."/>
            <person name="Sowa M.E."/>
            <person name="Gygi S.P."/>
        </authorList>
    </citation>
    <scope>PHOSPHORYLATION [LARGE SCALE ANALYSIS] AT SER-117</scope>
    <scope>IDENTIFICATION BY MASS SPECTROMETRY [LARGE SCALE ANALYSIS]</scope>
    <source>
        <tissue>Testis</tissue>
    </source>
</reference>
<organism>
    <name type="scientific">Mus musculus</name>
    <name type="common">Mouse</name>
    <dbReference type="NCBI Taxonomy" id="10090"/>
    <lineage>
        <taxon>Eukaryota</taxon>
        <taxon>Metazoa</taxon>
        <taxon>Chordata</taxon>
        <taxon>Craniata</taxon>
        <taxon>Vertebrata</taxon>
        <taxon>Euteleostomi</taxon>
        <taxon>Mammalia</taxon>
        <taxon>Eutheria</taxon>
        <taxon>Euarchontoglires</taxon>
        <taxon>Glires</taxon>
        <taxon>Rodentia</taxon>
        <taxon>Myomorpha</taxon>
        <taxon>Muroidea</taxon>
        <taxon>Muridae</taxon>
        <taxon>Murinae</taxon>
        <taxon>Mus</taxon>
        <taxon>Mus</taxon>
    </lineage>
</organism>
<comment type="function">
    <text evidence="1">Involved in the recruitment of key centrosomal proteins to the centrosome. Provides centrosomal microtubule-nucleation activity on the gamma-tubulin ring complexes (gamma-TuRCs) and has critical roles in forming a focused bipolar spindle, which is needed for proper tension generation between sister chromatids. Required for localization of KIZ, AKAP9 and gamma-tubulin ring complexes (gamma-TuRCs) (By similarity). Involved in centriole duplication. Required for CDK5RAP22, CEP152, WDR62 and CEP63 centrosomal localization and promotes the centrosomal localization of CDK2 (By similarity).</text>
</comment>
<comment type="subunit">
    <text evidence="1">Interacts with KIZ, PCM1 and CDK5RAP2.</text>
</comment>
<comment type="subcellular location">
    <subcellularLocation>
        <location evidence="1">Cytoplasm</location>
        <location evidence="1">Cytoskeleton</location>
        <location evidence="1">Microtubule organizing center</location>
        <location evidence="1">Centrosome</location>
    </subcellularLocation>
    <subcellularLocation>
        <location evidence="1">Cytoplasm</location>
        <location evidence="1">Cytoskeleton</location>
        <location evidence="1">Microtubule organizing center</location>
        <location evidence="1">Centrosome</location>
        <location evidence="1">Centriolar satellite</location>
    </subcellularLocation>
    <text evidence="1">Localizes to the centrosome and centrosome-surrounding particles throughout the cell cycle. These particles disappear after microtubules are depolymerized using nocodazole, suggesting that CEP72-associating particles localize in a microtubule-dependent manner (By similarity).</text>
</comment>
<comment type="alternative products">
    <event type="alternative splicing"/>
    <isoform>
        <id>Q9D3R3-1</id>
        <name>1</name>
        <sequence type="displayed"/>
    </isoform>
    <isoform>
        <id>Q9D3R3-2</id>
        <name>2</name>
        <sequence type="described" ref="VSP_012748 VSP_012749"/>
    </isoform>
</comment>
<comment type="similarity">
    <text evidence="5">Belongs to the CEP72 family.</text>
</comment>
<comment type="sequence caution" evidence="5">
    <conflict type="erroneous initiation">
        <sequence resource="EMBL-CDS" id="BAC28870"/>
    </conflict>
</comment>
<comment type="sequence caution" evidence="5">
    <conflict type="miscellaneous discrepancy">
        <sequence resource="EMBL-CDS" id="BAD32467"/>
    </conflict>
    <text>The sequence differs from that shown because it seems to be derived from a pre-mRNA.</text>
</comment>
<feature type="chain" id="PRO_0000089500" description="Centrosomal protein of 72 kDa">
    <location>
        <begin position="1"/>
        <end position="646"/>
    </location>
</feature>
<feature type="repeat" description="LRR 1">
    <location>
        <begin position="28"/>
        <end position="49"/>
    </location>
</feature>
<feature type="repeat" description="LRR 2">
    <location>
        <begin position="54"/>
        <end position="75"/>
    </location>
</feature>
<feature type="repeat" description="LRR 3">
    <location>
        <begin position="76"/>
        <end position="97"/>
    </location>
</feature>
<feature type="domain" description="LRRCT">
    <location>
        <begin position="110"/>
        <end position="149"/>
    </location>
</feature>
<feature type="region of interest" description="Disordered" evidence="3">
    <location>
        <begin position="300"/>
        <end position="342"/>
    </location>
</feature>
<feature type="region of interest" description="Disordered" evidence="3">
    <location>
        <begin position="357"/>
        <end position="399"/>
    </location>
</feature>
<feature type="coiled-coil region" evidence="2">
    <location>
        <begin position="476"/>
        <end position="622"/>
    </location>
</feature>
<feature type="compositionally biased region" description="Low complexity" evidence="3">
    <location>
        <begin position="307"/>
        <end position="319"/>
    </location>
</feature>
<feature type="compositionally biased region" description="Basic and acidic residues" evidence="3">
    <location>
        <begin position="383"/>
        <end position="392"/>
    </location>
</feature>
<feature type="modified residue" description="Phosphoserine" evidence="6">
    <location>
        <position position="117"/>
    </location>
</feature>
<feature type="modified residue" description="Phosphoserine" evidence="1">
    <location>
        <position position="236"/>
    </location>
</feature>
<feature type="modified residue" description="Phosphoserine" evidence="1">
    <location>
        <position position="380"/>
    </location>
</feature>
<feature type="modified residue" description="Phosphoserine" evidence="1">
    <location>
        <position position="402"/>
    </location>
</feature>
<feature type="splice variant" id="VSP_012748" description="In isoform 2." evidence="4">
    <location>
        <begin position="1"/>
        <end position="286"/>
    </location>
</feature>
<feature type="splice variant" id="VSP_012749" description="In isoform 2." evidence="4">
    <location>
        <begin position="321"/>
        <end position="400"/>
    </location>
</feature>
<feature type="sequence conflict" description="In Ref. 1; BAB30613." evidence="5" ref="1">
    <original>SG</original>
    <variation>RA</variation>
    <location>
        <begin position="18"/>
        <end position="19"/>
    </location>
</feature>
<feature type="sequence conflict" description="In Ref. 1; BAB27729." evidence="5" ref="1">
    <original>V</original>
    <variation>L</variation>
    <location>
        <position position="301"/>
    </location>
</feature>
<proteinExistence type="evidence at protein level"/>
<dbReference type="EMBL" id="AK011607">
    <property type="protein sequence ID" value="BAB27729.1"/>
    <property type="molecule type" value="mRNA"/>
</dbReference>
<dbReference type="EMBL" id="AK017134">
    <property type="protein sequence ID" value="BAB30613.2"/>
    <property type="molecule type" value="mRNA"/>
</dbReference>
<dbReference type="EMBL" id="AK034892">
    <property type="protein sequence ID" value="BAC28870.1"/>
    <property type="status" value="ALT_INIT"/>
    <property type="molecule type" value="mRNA"/>
</dbReference>
<dbReference type="EMBL" id="AK161033">
    <property type="protein sequence ID" value="BAE36159.1"/>
    <property type="molecule type" value="mRNA"/>
</dbReference>
<dbReference type="EMBL" id="CT010471">
    <property type="status" value="NOT_ANNOTATED_CDS"/>
    <property type="molecule type" value="Genomic_DNA"/>
</dbReference>
<dbReference type="EMBL" id="BC100549">
    <property type="protein sequence ID" value="AAI00550.1"/>
    <property type="molecule type" value="mRNA"/>
</dbReference>
<dbReference type="EMBL" id="AK173189">
    <property type="protein sequence ID" value="BAD32467.1"/>
    <property type="status" value="ALT_SEQ"/>
    <property type="molecule type" value="Transcribed_RNA"/>
</dbReference>
<dbReference type="CCDS" id="CCDS26639.1">
    <molecule id="Q9D3R3-1"/>
</dbReference>
<dbReference type="RefSeq" id="NP_083235.3">
    <molecule id="Q9D3R3-1"/>
    <property type="nucleotide sequence ID" value="NM_028959.3"/>
</dbReference>
<dbReference type="SMR" id="Q9D3R3"/>
<dbReference type="BioGRID" id="216776">
    <property type="interactions" value="53"/>
</dbReference>
<dbReference type="FunCoup" id="Q9D3R3">
    <property type="interactions" value="698"/>
</dbReference>
<dbReference type="IntAct" id="Q9D3R3">
    <property type="interactions" value="52"/>
</dbReference>
<dbReference type="MINT" id="Q9D3R3"/>
<dbReference type="STRING" id="10090.ENSMUSP00000037788"/>
<dbReference type="GlyGen" id="Q9D3R3">
    <property type="glycosylation" value="1 site, 1 O-linked glycan (1 site)"/>
</dbReference>
<dbReference type="iPTMnet" id="Q9D3R3"/>
<dbReference type="PhosphoSitePlus" id="Q9D3R3"/>
<dbReference type="SwissPalm" id="Q9D3R3"/>
<dbReference type="jPOST" id="Q9D3R3"/>
<dbReference type="PaxDb" id="10090-ENSMUSP00000037788"/>
<dbReference type="PeptideAtlas" id="Q9D3R3"/>
<dbReference type="ProteomicsDB" id="280001">
    <molecule id="Q9D3R3-1"/>
</dbReference>
<dbReference type="ProteomicsDB" id="280002">
    <molecule id="Q9D3R3-2"/>
</dbReference>
<dbReference type="Antibodypedia" id="22247">
    <property type="antibodies" value="181 antibodies from 24 providers"/>
</dbReference>
<dbReference type="Ensembl" id="ENSMUST00000036456.8">
    <molecule id="Q9D3R3-1"/>
    <property type="protein sequence ID" value="ENSMUSP00000037788.7"/>
    <property type="gene ID" value="ENSMUSG00000021572.10"/>
</dbReference>
<dbReference type="GeneID" id="74470"/>
<dbReference type="KEGG" id="mmu:74470"/>
<dbReference type="UCSC" id="uc007rep.2">
    <molecule id="Q9D3R3-2"/>
    <property type="organism name" value="mouse"/>
</dbReference>
<dbReference type="UCSC" id="uc007req.2">
    <molecule id="Q9D3R3-1"/>
    <property type="organism name" value="mouse"/>
</dbReference>
<dbReference type="AGR" id="MGI:1921720"/>
<dbReference type="CTD" id="55722"/>
<dbReference type="MGI" id="MGI:1921720">
    <property type="gene designation" value="Cep72"/>
</dbReference>
<dbReference type="VEuPathDB" id="HostDB:ENSMUSG00000021572"/>
<dbReference type="eggNOG" id="ENOG502QV2Y">
    <property type="taxonomic scope" value="Eukaryota"/>
</dbReference>
<dbReference type="GeneTree" id="ENSGT00530000063884"/>
<dbReference type="HOGENOM" id="CLU_027497_0_0_1"/>
<dbReference type="InParanoid" id="Q9D3R3"/>
<dbReference type="OMA" id="HPRAKCT"/>
<dbReference type="OrthoDB" id="676979at2759"/>
<dbReference type="PhylomeDB" id="Q9D3R3"/>
<dbReference type="TreeFam" id="TF338646"/>
<dbReference type="Reactome" id="R-MMU-2565942">
    <property type="pathway name" value="Regulation of PLK1 Activity at G2/M Transition"/>
</dbReference>
<dbReference type="Reactome" id="R-MMU-380259">
    <property type="pathway name" value="Loss of Nlp from mitotic centrosomes"/>
</dbReference>
<dbReference type="Reactome" id="R-MMU-380270">
    <property type="pathway name" value="Recruitment of mitotic centrosome proteins and complexes"/>
</dbReference>
<dbReference type="Reactome" id="R-MMU-380284">
    <property type="pathway name" value="Loss of proteins required for interphase microtubule organization from the centrosome"/>
</dbReference>
<dbReference type="Reactome" id="R-MMU-380320">
    <property type="pathway name" value="Recruitment of NuMA to mitotic centrosomes"/>
</dbReference>
<dbReference type="Reactome" id="R-MMU-5620912">
    <property type="pathway name" value="Anchoring of the basal body to the plasma membrane"/>
</dbReference>
<dbReference type="Reactome" id="R-MMU-8854518">
    <property type="pathway name" value="AURKA Activation by TPX2"/>
</dbReference>
<dbReference type="BioGRID-ORCS" id="74470">
    <property type="hits" value="3 hits in 78 CRISPR screens"/>
</dbReference>
<dbReference type="ChiTaRS" id="Cep72">
    <property type="organism name" value="mouse"/>
</dbReference>
<dbReference type="PRO" id="PR:Q9D3R3"/>
<dbReference type="Proteomes" id="UP000000589">
    <property type="component" value="Chromosome 13"/>
</dbReference>
<dbReference type="RNAct" id="Q9D3R3">
    <property type="molecule type" value="protein"/>
</dbReference>
<dbReference type="Bgee" id="ENSMUSG00000021572">
    <property type="expression patterns" value="Expressed in spermatocyte and 104 other cell types or tissues"/>
</dbReference>
<dbReference type="ExpressionAtlas" id="Q9D3R3">
    <property type="expression patterns" value="baseline and differential"/>
</dbReference>
<dbReference type="GO" id="GO:0034451">
    <property type="term" value="C:centriolar satellite"/>
    <property type="evidence" value="ECO:0000314"/>
    <property type="project" value="MGI"/>
</dbReference>
<dbReference type="GO" id="GO:0005813">
    <property type="term" value="C:centrosome"/>
    <property type="evidence" value="ECO:0000250"/>
    <property type="project" value="UniProtKB"/>
</dbReference>
<dbReference type="GO" id="GO:0036064">
    <property type="term" value="C:ciliary basal body"/>
    <property type="evidence" value="ECO:0007669"/>
    <property type="project" value="Ensembl"/>
</dbReference>
<dbReference type="GO" id="GO:0005829">
    <property type="term" value="C:cytosol"/>
    <property type="evidence" value="ECO:0007669"/>
    <property type="project" value="Ensembl"/>
</dbReference>
<dbReference type="GO" id="GO:0042802">
    <property type="term" value="F:identical protein binding"/>
    <property type="evidence" value="ECO:0000353"/>
    <property type="project" value="MGI"/>
</dbReference>
<dbReference type="GO" id="GO:0007099">
    <property type="term" value="P:centriole replication"/>
    <property type="evidence" value="ECO:0007669"/>
    <property type="project" value="Ensembl"/>
</dbReference>
<dbReference type="GO" id="GO:0033566">
    <property type="term" value="P:gamma-tubulin complex localization"/>
    <property type="evidence" value="ECO:0000250"/>
    <property type="project" value="UniProtKB"/>
</dbReference>
<dbReference type="GO" id="GO:1904779">
    <property type="term" value="P:regulation of protein localization to centrosome"/>
    <property type="evidence" value="ECO:0007669"/>
    <property type="project" value="Ensembl"/>
</dbReference>
<dbReference type="GO" id="GO:0007051">
    <property type="term" value="P:spindle organization"/>
    <property type="evidence" value="ECO:0000250"/>
    <property type="project" value="UniProtKB"/>
</dbReference>
<dbReference type="FunFam" id="3.80.10.10:FF:000489">
    <property type="entry name" value="Centrosomal protein of 72 kDa"/>
    <property type="match status" value="1"/>
</dbReference>
<dbReference type="Gene3D" id="3.80.10.10">
    <property type="entry name" value="Ribonuclease Inhibitor"/>
    <property type="match status" value="1"/>
</dbReference>
<dbReference type="InterPro" id="IPR055320">
    <property type="entry name" value="CEP72-like"/>
</dbReference>
<dbReference type="InterPro" id="IPR001611">
    <property type="entry name" value="Leu-rich_rpt"/>
</dbReference>
<dbReference type="InterPro" id="IPR003591">
    <property type="entry name" value="Leu-rich_rpt_typical-subtyp"/>
</dbReference>
<dbReference type="InterPro" id="IPR032675">
    <property type="entry name" value="LRR_dom_sf"/>
</dbReference>
<dbReference type="InterPro" id="IPR003603">
    <property type="entry name" value="U2A'_phosphoprotein32A_C"/>
</dbReference>
<dbReference type="PANTHER" id="PTHR23311:SF7">
    <property type="entry name" value="CENTROSOMAL PROTEIN OF 72 KDA"/>
    <property type="match status" value="1"/>
</dbReference>
<dbReference type="PANTHER" id="PTHR23311">
    <property type="entry name" value="HEAT SHOCK REGULATED 2"/>
    <property type="match status" value="1"/>
</dbReference>
<dbReference type="Pfam" id="PF14580">
    <property type="entry name" value="LRR_9"/>
    <property type="match status" value="1"/>
</dbReference>
<dbReference type="SMART" id="SM00369">
    <property type="entry name" value="LRR_TYP"/>
    <property type="match status" value="2"/>
</dbReference>
<dbReference type="SMART" id="SM00446">
    <property type="entry name" value="LRRcap"/>
    <property type="match status" value="1"/>
</dbReference>
<dbReference type="SUPFAM" id="SSF52058">
    <property type="entry name" value="L domain-like"/>
    <property type="match status" value="1"/>
</dbReference>
<dbReference type="PROSITE" id="PS51450">
    <property type="entry name" value="LRR"/>
    <property type="match status" value="2"/>
</dbReference>
<gene>
    <name type="primary">Cep72</name>
    <name type="synonym">Kiaa1519</name>
</gene>
<sequence length="646" mass="72433">MAPGQRLVLCEETVRERSGLGPHRDLAELRSLSIPGTYQEKITHLGNSLMHLTALKSLDLSRNSLVSLEGIQYLVSLESLNLYYNCISSLAEVFRLHTLLELQDVDFRLNPVVKNESDYRLFVVHMLPKLRQLDDRPVRESERKASQLHFAPEDSLNSKENFSTTLTVGRPHHLRNRCTETSAKKCLVMDADDEAVLNLIAECEWDLSNPPGNMSSSQKEHEADLHYAQESRHLLSPLSIQHQCGDSARRGHEKKKVTSRGCPGHSPQDQLCGELPLQHGLPEACHMHVQHARITSQPDSVDVEDCASSAQKSSLSSQKTVNPLPVPEKYRKRRMPGGRFQVPSDRECLSFLERADGPSSLEDSLSRQDGLEGQSQVALSHSEALEAEERTSHGTSDPRVLSPKLCSAAVPERRSTLEVALLEALLDLIDRCSSGSGSLHGNEAFLAQAKHVLSSLQEFTATRDSSALEKEGIGYLSLENKTLQSRLAEQQQQYTATVTKMTAELNNTKRELDTLRQHLDKSLEENSHLKSLLYNVKKEVKTADTSTALTLQITGLQASMKQLSGEVVELKQHVEHYDKIQELTQMLQESHSSLVSTNEHLLQELSRTRAQHRAEVEQMRWSFQEFKKTTALIPHRSSRRGGRQSC</sequence>
<accession>Q9D3R3</accession>
<accession>E9QQ95</accession>
<accession>Q3TU12</accession>
<accession>Q497H8</accession>
<accession>Q69ZH7</accession>
<accession>Q8BM53</accession>
<accession>Q9D0B7</accession>
<keyword id="KW-0025">Alternative splicing</keyword>
<keyword id="KW-0175">Coiled coil</keyword>
<keyword id="KW-0963">Cytoplasm</keyword>
<keyword id="KW-0206">Cytoskeleton</keyword>
<keyword id="KW-0433">Leucine-rich repeat</keyword>
<keyword id="KW-0597">Phosphoprotein</keyword>
<keyword id="KW-1185">Reference proteome</keyword>
<keyword id="KW-0677">Repeat</keyword>
<protein>
    <recommendedName>
        <fullName>Centrosomal protein of 72 kDa</fullName>
        <shortName>Cep72</shortName>
    </recommendedName>
</protein>
<name>CEP72_MOUSE</name>